<evidence type="ECO:0000250" key="1"/>
<evidence type="ECO:0000305" key="2"/>
<organism>
    <name type="scientific">Methanosarcina acetivorans (strain ATCC 35395 / DSM 2834 / JCM 12185 / C2A)</name>
    <dbReference type="NCBI Taxonomy" id="188937"/>
    <lineage>
        <taxon>Archaea</taxon>
        <taxon>Methanobacteriati</taxon>
        <taxon>Methanobacteriota</taxon>
        <taxon>Stenosarchaea group</taxon>
        <taxon>Methanomicrobia</taxon>
        <taxon>Methanosarcinales</taxon>
        <taxon>Methanosarcinaceae</taxon>
        <taxon>Methanosarcina</taxon>
    </lineage>
</organism>
<feature type="chain" id="PRO_0000216563" description="Dimethylamine methyltransferase MtbB1">
    <location>
        <begin position="1"/>
        <end position="467"/>
    </location>
</feature>
<feature type="non-standard amino acid" description="Pyrrolysine" evidence="1">
    <location>
        <position position="356"/>
    </location>
</feature>
<comment type="function">
    <text evidence="1">Catalyzes the transfer of a methyl group from dimethylamine to the corrinoid cofactor of MtbC.</text>
</comment>
<comment type="catalytic activity">
    <reaction>
        <text>Co(I)-[dimethylamine-specific corrinoid protein] + dimethylamine + H(+) = methyl-Co(III)-[dimethylamine-specific corrinoid protein] + methylamine</text>
        <dbReference type="Rhea" id="RHEA:41175"/>
        <dbReference type="Rhea" id="RHEA-COMP:11122"/>
        <dbReference type="Rhea" id="RHEA-COMP:11123"/>
        <dbReference type="ChEBI" id="CHEBI:15378"/>
        <dbReference type="ChEBI" id="CHEBI:58040"/>
        <dbReference type="ChEBI" id="CHEBI:59338"/>
        <dbReference type="ChEBI" id="CHEBI:85033"/>
        <dbReference type="ChEBI" id="CHEBI:85035"/>
        <dbReference type="EC" id="2.1.1.249"/>
    </reaction>
</comment>
<comment type="pathway">
    <text>One-carbon metabolism; methanogenesis from dimethylamine.</text>
</comment>
<comment type="similarity">
    <text evidence="2">Belongs to the dimethylamine methyltransferase family.</text>
</comment>
<dbReference type="EC" id="2.1.1.249"/>
<dbReference type="EMBL" id="AE010299">
    <property type="protein sequence ID" value="AAM03976.1"/>
    <property type="molecule type" value="Genomic_DNA"/>
</dbReference>
<dbReference type="STRING" id="188937.MA_0532"/>
<dbReference type="KEGG" id="mac:MA_0532"/>
<dbReference type="HOGENOM" id="CLU_046512_0_0_2"/>
<dbReference type="InParanoid" id="Q8TTA5"/>
<dbReference type="PhylomeDB" id="Q8TTA5"/>
<dbReference type="UniPathway" id="UPA00644"/>
<dbReference type="Proteomes" id="UP000002487">
    <property type="component" value="Chromosome"/>
</dbReference>
<dbReference type="GO" id="GO:0043791">
    <property type="term" value="F:dimethylamine methyltransferase activity"/>
    <property type="evidence" value="ECO:0007669"/>
    <property type="project" value="UniProtKB-EC"/>
</dbReference>
<dbReference type="GO" id="GO:0015948">
    <property type="term" value="P:methanogenesis"/>
    <property type="evidence" value="ECO:0007669"/>
    <property type="project" value="UniProtKB-KW"/>
</dbReference>
<dbReference type="GO" id="GO:0032259">
    <property type="term" value="P:methylation"/>
    <property type="evidence" value="ECO:0007669"/>
    <property type="project" value="UniProtKB-KW"/>
</dbReference>
<dbReference type="InterPro" id="IPR012653">
    <property type="entry name" value="Dimeth_MeTrfase_MtbB"/>
</dbReference>
<dbReference type="NCBIfam" id="TIGR02368">
    <property type="entry name" value="dimeth_PyL"/>
    <property type="match status" value="1"/>
</dbReference>
<dbReference type="Pfam" id="PF09505">
    <property type="entry name" value="Dimeth_Pyl"/>
    <property type="match status" value="1"/>
</dbReference>
<gene>
    <name type="primary">mtbB1</name>
    <name type="ordered locus">MA_0532</name>
</gene>
<protein>
    <recommendedName>
        <fullName>Dimethylamine methyltransferase MtbB1</fullName>
        <shortName>DMA methyltransferase 1</shortName>
        <shortName>DMAMT 1</shortName>
        <ecNumber>2.1.1.249</ecNumber>
    </recommendedName>
    <alternativeName>
        <fullName>Dimethylamine--corrinoid protein methyltransferase 1</fullName>
    </alternativeName>
</protein>
<keyword id="KW-0484">Methanogenesis</keyword>
<keyword id="KW-0489">Methyltransferase</keyword>
<keyword id="KW-0669">Pyrrolysine</keyword>
<keyword id="KW-1185">Reference proteome</keyword>
<keyword id="KW-0808">Transferase</keyword>
<sequence length="467" mass="50392">MATEYALRMGDGKRVFLTKEKILEELEAGMANASDLGEIPDLSADEIDKLAEILMMPGKAVSVEQGMEVPVTHDIGTIRLDGDQGNSGVGIPSSRLVGCMTHERAFGADTMELGHIDYSFKPVKPVVSNECQAMEVCQQNMIIPLFYGAMPNMGLYYTPDGPFENPGDLMKAFKIQEAWESMEHAAEHLTRDTVWVMQKLFASGTDGVNFDTTAAAGDADMYGTLHAIEALRKEFPDMYIEAGMAGECVLGMHGNLQYDGVTLAGLWPHQQAPLVAKAGANVFGPVCNTNTSKTSAWNLARAVNFMKAAVQASPIPCHVDMGMGVGGIPMLETPPVDAVTRASKAMVEVAGVDGIOIGVGDPLGMPISHIMASGMTGIRAAGDLVARMQFSKNMRIGEAKEYVAKKLNVDVMDLADEHVMRELREELDIGVITSVPGAAKGIAAKMNIEKLLDIKINSCNLFRKQIQ</sequence>
<reference key="1">
    <citation type="journal article" date="2002" name="Genome Res.">
        <title>The genome of Methanosarcina acetivorans reveals extensive metabolic and physiological diversity.</title>
        <authorList>
            <person name="Galagan J.E."/>
            <person name="Nusbaum C."/>
            <person name="Roy A."/>
            <person name="Endrizzi M.G."/>
            <person name="Macdonald P."/>
            <person name="FitzHugh W."/>
            <person name="Calvo S."/>
            <person name="Engels R."/>
            <person name="Smirnov S."/>
            <person name="Atnoor D."/>
            <person name="Brown A."/>
            <person name="Allen N."/>
            <person name="Naylor J."/>
            <person name="Stange-Thomann N."/>
            <person name="DeArellano K."/>
            <person name="Johnson R."/>
            <person name="Linton L."/>
            <person name="McEwan P."/>
            <person name="McKernan K."/>
            <person name="Talamas J."/>
            <person name="Tirrell A."/>
            <person name="Ye W."/>
            <person name="Zimmer A."/>
            <person name="Barber R.D."/>
            <person name="Cann I."/>
            <person name="Graham D.E."/>
            <person name="Grahame D.A."/>
            <person name="Guss A.M."/>
            <person name="Hedderich R."/>
            <person name="Ingram-Smith C."/>
            <person name="Kuettner H.C."/>
            <person name="Krzycki J.A."/>
            <person name="Leigh J.A."/>
            <person name="Li W."/>
            <person name="Liu J."/>
            <person name="Mukhopadhyay B."/>
            <person name="Reeve J.N."/>
            <person name="Smith K."/>
            <person name="Springer T.A."/>
            <person name="Umayam L.A."/>
            <person name="White O."/>
            <person name="White R.H."/>
            <person name="de Macario E.C."/>
            <person name="Ferry J.G."/>
            <person name="Jarrell K.F."/>
            <person name="Jing H."/>
            <person name="Macario A.J.L."/>
            <person name="Paulsen I.T."/>
            <person name="Pritchett M."/>
            <person name="Sowers K.R."/>
            <person name="Swanson R.V."/>
            <person name="Zinder S.H."/>
            <person name="Lander E."/>
            <person name="Metcalf W.W."/>
            <person name="Birren B."/>
        </authorList>
    </citation>
    <scope>NUCLEOTIDE SEQUENCE [LARGE SCALE GENOMIC DNA]</scope>
    <source>
        <strain>ATCC 35395 / DSM 2834 / JCM 12185 / C2A</strain>
    </source>
</reference>
<proteinExistence type="inferred from homology"/>
<name>MTBB1_METAC</name>
<accession>Q8TTA5</accession>